<sequence length="129" mass="14546">MQITLLKSKLHRVTTTHSELDYEGSCAIDGHFLEVAGIREYEQIQIYNVNNGNRFTTYAIRAEENTGIISVNGAAAHKAAPGDLLIIATYASMDEKEAEEFKPIMVYFDEKNQITHTRNTIPKQMQQLA</sequence>
<accession>Q31FF9</accession>
<gene>
    <name evidence="1" type="primary">panD</name>
    <name type="ordered locus">Tcr_1522</name>
</gene>
<evidence type="ECO:0000255" key="1">
    <source>
        <dbReference type="HAMAP-Rule" id="MF_00446"/>
    </source>
</evidence>
<comment type="function">
    <text evidence="1">Catalyzes the pyruvoyl-dependent decarboxylation of aspartate to produce beta-alanine.</text>
</comment>
<comment type="catalytic activity">
    <reaction evidence="1">
        <text>L-aspartate + H(+) = beta-alanine + CO2</text>
        <dbReference type="Rhea" id="RHEA:19497"/>
        <dbReference type="ChEBI" id="CHEBI:15378"/>
        <dbReference type="ChEBI" id="CHEBI:16526"/>
        <dbReference type="ChEBI" id="CHEBI:29991"/>
        <dbReference type="ChEBI" id="CHEBI:57966"/>
        <dbReference type="EC" id="4.1.1.11"/>
    </reaction>
</comment>
<comment type="cofactor">
    <cofactor evidence="1">
        <name>pyruvate</name>
        <dbReference type="ChEBI" id="CHEBI:15361"/>
    </cofactor>
    <text evidence="1">Binds 1 pyruvoyl group covalently per subunit.</text>
</comment>
<comment type="pathway">
    <text evidence="1">Cofactor biosynthesis; (R)-pantothenate biosynthesis; beta-alanine from L-aspartate: step 1/1.</text>
</comment>
<comment type="subunit">
    <text evidence="1">Heterooctamer of four alpha and four beta subunits.</text>
</comment>
<comment type="subcellular location">
    <subcellularLocation>
        <location evidence="1">Cytoplasm</location>
    </subcellularLocation>
</comment>
<comment type="PTM">
    <text evidence="1">Is synthesized initially as an inactive proenzyme, which is activated by self-cleavage at a specific serine bond to produce a beta-subunit with a hydroxyl group at its C-terminus and an alpha-subunit with a pyruvoyl group at its N-terminus.</text>
</comment>
<comment type="similarity">
    <text evidence="1">Belongs to the PanD family.</text>
</comment>
<keyword id="KW-0068">Autocatalytic cleavage</keyword>
<keyword id="KW-0963">Cytoplasm</keyword>
<keyword id="KW-0210">Decarboxylase</keyword>
<keyword id="KW-0456">Lyase</keyword>
<keyword id="KW-0566">Pantothenate biosynthesis</keyword>
<keyword id="KW-0670">Pyruvate</keyword>
<keyword id="KW-0704">Schiff base</keyword>
<keyword id="KW-0865">Zymogen</keyword>
<proteinExistence type="inferred from homology"/>
<dbReference type="EC" id="4.1.1.11" evidence="1"/>
<dbReference type="EMBL" id="CP000109">
    <property type="protein sequence ID" value="ABB42114.1"/>
    <property type="molecule type" value="Genomic_DNA"/>
</dbReference>
<dbReference type="SMR" id="Q31FF9"/>
<dbReference type="STRING" id="317025.Tcr_1522"/>
<dbReference type="KEGG" id="tcx:Tcr_1522"/>
<dbReference type="eggNOG" id="COG0853">
    <property type="taxonomic scope" value="Bacteria"/>
</dbReference>
<dbReference type="HOGENOM" id="CLU_115305_2_1_6"/>
<dbReference type="OrthoDB" id="9803983at2"/>
<dbReference type="UniPathway" id="UPA00028">
    <property type="reaction ID" value="UER00002"/>
</dbReference>
<dbReference type="GO" id="GO:0005829">
    <property type="term" value="C:cytosol"/>
    <property type="evidence" value="ECO:0007669"/>
    <property type="project" value="TreeGrafter"/>
</dbReference>
<dbReference type="GO" id="GO:0004068">
    <property type="term" value="F:aspartate 1-decarboxylase activity"/>
    <property type="evidence" value="ECO:0007669"/>
    <property type="project" value="UniProtKB-UniRule"/>
</dbReference>
<dbReference type="GO" id="GO:0006523">
    <property type="term" value="P:alanine biosynthetic process"/>
    <property type="evidence" value="ECO:0007669"/>
    <property type="project" value="InterPro"/>
</dbReference>
<dbReference type="GO" id="GO:0015940">
    <property type="term" value="P:pantothenate biosynthetic process"/>
    <property type="evidence" value="ECO:0007669"/>
    <property type="project" value="UniProtKB-UniRule"/>
</dbReference>
<dbReference type="CDD" id="cd06919">
    <property type="entry name" value="Asp_decarbox"/>
    <property type="match status" value="1"/>
</dbReference>
<dbReference type="Gene3D" id="2.40.40.20">
    <property type="match status" value="1"/>
</dbReference>
<dbReference type="HAMAP" id="MF_00446">
    <property type="entry name" value="PanD"/>
    <property type="match status" value="1"/>
</dbReference>
<dbReference type="InterPro" id="IPR009010">
    <property type="entry name" value="Asp_de-COase-like_dom_sf"/>
</dbReference>
<dbReference type="InterPro" id="IPR003190">
    <property type="entry name" value="Asp_decarbox"/>
</dbReference>
<dbReference type="NCBIfam" id="TIGR00223">
    <property type="entry name" value="panD"/>
    <property type="match status" value="1"/>
</dbReference>
<dbReference type="PANTHER" id="PTHR21012">
    <property type="entry name" value="ASPARTATE 1-DECARBOXYLASE"/>
    <property type="match status" value="1"/>
</dbReference>
<dbReference type="PANTHER" id="PTHR21012:SF0">
    <property type="entry name" value="ASPARTATE 1-DECARBOXYLASE"/>
    <property type="match status" value="1"/>
</dbReference>
<dbReference type="Pfam" id="PF02261">
    <property type="entry name" value="Asp_decarbox"/>
    <property type="match status" value="1"/>
</dbReference>
<dbReference type="PIRSF" id="PIRSF006246">
    <property type="entry name" value="Asp_decarbox"/>
    <property type="match status" value="1"/>
</dbReference>
<dbReference type="SUPFAM" id="SSF50692">
    <property type="entry name" value="ADC-like"/>
    <property type="match status" value="1"/>
</dbReference>
<feature type="chain" id="PRO_0000236909" description="Aspartate 1-decarboxylase beta chain" evidence="1">
    <location>
        <begin position="1"/>
        <end position="24"/>
    </location>
</feature>
<feature type="chain" id="PRO_0000236910" description="Aspartate 1-decarboxylase alpha chain" evidence="1">
    <location>
        <begin position="25"/>
        <end position="129"/>
    </location>
</feature>
<feature type="active site" description="Schiff-base intermediate with substrate; via pyruvic acid" evidence="1">
    <location>
        <position position="25"/>
    </location>
</feature>
<feature type="active site" description="Proton donor" evidence="1">
    <location>
        <position position="58"/>
    </location>
</feature>
<feature type="binding site" evidence="1">
    <location>
        <position position="57"/>
    </location>
    <ligand>
        <name>substrate</name>
    </ligand>
</feature>
<feature type="binding site" evidence="1">
    <location>
        <begin position="73"/>
        <end position="75"/>
    </location>
    <ligand>
        <name>substrate</name>
    </ligand>
</feature>
<feature type="modified residue" description="Pyruvic acid (Ser)" evidence="1">
    <location>
        <position position="25"/>
    </location>
</feature>
<name>PAND_HYDCU</name>
<reference key="1">
    <citation type="journal article" date="2006" name="PLoS Biol.">
        <title>The genome of deep-sea vent chemolithoautotroph Thiomicrospira crunogena XCL-2.</title>
        <authorList>
            <person name="Scott K.M."/>
            <person name="Sievert S.M."/>
            <person name="Abril F.N."/>
            <person name="Ball L.A."/>
            <person name="Barrett C.J."/>
            <person name="Blake R.A."/>
            <person name="Boller A.J."/>
            <person name="Chain P.S.G."/>
            <person name="Clark J.A."/>
            <person name="Davis C.R."/>
            <person name="Detter C."/>
            <person name="Do K.F."/>
            <person name="Dobrinski K.P."/>
            <person name="Faza B.I."/>
            <person name="Fitzpatrick K.A."/>
            <person name="Freyermuth S.K."/>
            <person name="Harmer T.L."/>
            <person name="Hauser L.J."/>
            <person name="Huegler M."/>
            <person name="Kerfeld C.A."/>
            <person name="Klotz M.G."/>
            <person name="Kong W.W."/>
            <person name="Land M."/>
            <person name="Lapidus A."/>
            <person name="Larimer F.W."/>
            <person name="Longo D.L."/>
            <person name="Lucas S."/>
            <person name="Malfatti S.A."/>
            <person name="Massey S.E."/>
            <person name="Martin D.D."/>
            <person name="McCuddin Z."/>
            <person name="Meyer F."/>
            <person name="Moore J.L."/>
            <person name="Ocampo L.H. Jr."/>
            <person name="Paul J.H."/>
            <person name="Paulsen I.T."/>
            <person name="Reep D.K."/>
            <person name="Ren Q."/>
            <person name="Ross R.L."/>
            <person name="Sato P.Y."/>
            <person name="Thomas P."/>
            <person name="Tinkham L.E."/>
            <person name="Zeruth G.T."/>
        </authorList>
    </citation>
    <scope>NUCLEOTIDE SEQUENCE [LARGE SCALE GENOMIC DNA]</scope>
    <source>
        <strain>DSM 25203 / XCL-2</strain>
    </source>
</reference>
<protein>
    <recommendedName>
        <fullName evidence="1">Aspartate 1-decarboxylase</fullName>
        <ecNumber evidence="1">4.1.1.11</ecNumber>
    </recommendedName>
    <alternativeName>
        <fullName evidence="1">Aspartate alpha-decarboxylase</fullName>
    </alternativeName>
    <component>
        <recommendedName>
            <fullName evidence="1">Aspartate 1-decarboxylase beta chain</fullName>
        </recommendedName>
    </component>
    <component>
        <recommendedName>
            <fullName evidence="1">Aspartate 1-decarboxylase alpha chain</fullName>
        </recommendedName>
    </component>
</protein>
<organism>
    <name type="scientific">Hydrogenovibrio crunogenus (strain DSM 25203 / XCL-2)</name>
    <name type="common">Thiomicrospira crunogena</name>
    <dbReference type="NCBI Taxonomy" id="317025"/>
    <lineage>
        <taxon>Bacteria</taxon>
        <taxon>Pseudomonadati</taxon>
        <taxon>Pseudomonadota</taxon>
        <taxon>Gammaproteobacteria</taxon>
        <taxon>Thiotrichales</taxon>
        <taxon>Piscirickettsiaceae</taxon>
        <taxon>Hydrogenovibrio</taxon>
    </lineage>
</organism>